<name>SPCS3_DROME</name>
<accession>Q9VCA9</accession>
<keyword id="KW-0256">Endoplasmic reticulum</keyword>
<keyword id="KW-0325">Glycoprotein</keyword>
<keyword id="KW-0472">Membrane</keyword>
<keyword id="KW-1185">Reference proteome</keyword>
<keyword id="KW-0735">Signal-anchor</keyword>
<keyword id="KW-0812">Transmembrane</keyword>
<keyword id="KW-1133">Transmembrane helix</keyword>
<protein>
    <recommendedName>
        <fullName>Signal peptidase complex subunit 3</fullName>
    </recommendedName>
    <alternativeName>
        <fullName>Microsomal signal peptidase 22 kDa subunit</fullName>
        <shortName>SPC22</shortName>
        <shortName>SPase 22 kDa subunit</shortName>
    </alternativeName>
</protein>
<proteinExistence type="evidence at transcript level"/>
<comment type="function">
    <text evidence="2 3">Essential component of the signal peptidase complex (SPC) which catalyzes the cleavage of N-terminal signal sequences from nascent proteins as they are translocated into the lumen of the endoplasmic reticulum (By similarity). Essential for the SPC catalytic activity, possibly by stabilizing and positioning the active center of the complex close to the lumenal surface (By similarity).</text>
</comment>
<comment type="function">
    <text evidence="5">(Microbial infection) Plays an important role in infection by flaviviruses such as West Nile virus and Dengue virus type 2.</text>
</comment>
<comment type="subunit">
    <text evidence="2">Component of the signal peptidase complex (SPC) composed of a catalytic subunit twr/SEC11 and three accessory subunits Spase12/SPCS1, Spase25/SPCS2 and Spase22-23/SPCS3. The complex induces a local thinning of the ER membrane which is used to measure the length of the signal peptide (SP) h-region of protein substrates. This ensures the selectivity of the complex towards h-regions shorter than 18-20 amino acids.</text>
</comment>
<comment type="subcellular location">
    <subcellularLocation>
        <location evidence="1">Endoplasmic reticulum membrane</location>
        <topology evidence="1">Single-pass type II membrane protein</topology>
    </subcellularLocation>
</comment>
<comment type="disruption phenotype">
    <text evidence="5">RNAi-mediated knockdown reduces infection by West Nile virus (WNV) and Dengue virus type 2 (DENV-2).</text>
</comment>
<comment type="similarity">
    <text evidence="6">Belongs to the SPCS3 family.</text>
</comment>
<feature type="chain" id="PRO_0000218944" description="Signal peptidase complex subunit 3">
    <location>
        <begin position="1"/>
        <end position="179"/>
    </location>
</feature>
<feature type="topological domain" description="Cytoplasmic" evidence="1">
    <location>
        <begin position="1"/>
        <end position="12"/>
    </location>
</feature>
<feature type="transmembrane region" description="Helical; Signal-anchor for type II membrane protein" evidence="4">
    <location>
        <begin position="13"/>
        <end position="33"/>
    </location>
</feature>
<feature type="topological domain" description="Lumenal" evidence="1">
    <location>
        <begin position="34"/>
        <end position="179"/>
    </location>
</feature>
<feature type="glycosylation site" description="N-linked (GlcNAc...) asparagine" evidence="4">
    <location>
        <position position="73"/>
    </location>
</feature>
<feature type="glycosylation site" description="N-linked (GlcNAc...) asparagine" evidence="4">
    <location>
        <position position="141"/>
    </location>
</feature>
<reference key="1">
    <citation type="journal article" date="2000" name="Science">
        <title>The genome sequence of Drosophila melanogaster.</title>
        <authorList>
            <person name="Adams M.D."/>
            <person name="Celniker S.E."/>
            <person name="Holt R.A."/>
            <person name="Evans C.A."/>
            <person name="Gocayne J.D."/>
            <person name="Amanatides P.G."/>
            <person name="Scherer S.E."/>
            <person name="Li P.W."/>
            <person name="Hoskins R.A."/>
            <person name="Galle R.F."/>
            <person name="George R.A."/>
            <person name="Lewis S.E."/>
            <person name="Richards S."/>
            <person name="Ashburner M."/>
            <person name="Henderson S.N."/>
            <person name="Sutton G.G."/>
            <person name="Wortman J.R."/>
            <person name="Yandell M.D."/>
            <person name="Zhang Q."/>
            <person name="Chen L.X."/>
            <person name="Brandon R.C."/>
            <person name="Rogers Y.-H.C."/>
            <person name="Blazej R.G."/>
            <person name="Champe M."/>
            <person name="Pfeiffer B.D."/>
            <person name="Wan K.H."/>
            <person name="Doyle C."/>
            <person name="Baxter E.G."/>
            <person name="Helt G."/>
            <person name="Nelson C.R."/>
            <person name="Miklos G.L.G."/>
            <person name="Abril J.F."/>
            <person name="Agbayani A."/>
            <person name="An H.-J."/>
            <person name="Andrews-Pfannkoch C."/>
            <person name="Baldwin D."/>
            <person name="Ballew R.M."/>
            <person name="Basu A."/>
            <person name="Baxendale J."/>
            <person name="Bayraktaroglu L."/>
            <person name="Beasley E.M."/>
            <person name="Beeson K.Y."/>
            <person name="Benos P.V."/>
            <person name="Berman B.P."/>
            <person name="Bhandari D."/>
            <person name="Bolshakov S."/>
            <person name="Borkova D."/>
            <person name="Botchan M.R."/>
            <person name="Bouck J."/>
            <person name="Brokstein P."/>
            <person name="Brottier P."/>
            <person name="Burtis K.C."/>
            <person name="Busam D.A."/>
            <person name="Butler H."/>
            <person name="Cadieu E."/>
            <person name="Center A."/>
            <person name="Chandra I."/>
            <person name="Cherry J.M."/>
            <person name="Cawley S."/>
            <person name="Dahlke C."/>
            <person name="Davenport L.B."/>
            <person name="Davies P."/>
            <person name="de Pablos B."/>
            <person name="Delcher A."/>
            <person name="Deng Z."/>
            <person name="Mays A.D."/>
            <person name="Dew I."/>
            <person name="Dietz S.M."/>
            <person name="Dodson K."/>
            <person name="Doup L.E."/>
            <person name="Downes M."/>
            <person name="Dugan-Rocha S."/>
            <person name="Dunkov B.C."/>
            <person name="Dunn P."/>
            <person name="Durbin K.J."/>
            <person name="Evangelista C.C."/>
            <person name="Ferraz C."/>
            <person name="Ferriera S."/>
            <person name="Fleischmann W."/>
            <person name="Fosler C."/>
            <person name="Gabrielian A.E."/>
            <person name="Garg N.S."/>
            <person name="Gelbart W.M."/>
            <person name="Glasser K."/>
            <person name="Glodek A."/>
            <person name="Gong F."/>
            <person name="Gorrell J.H."/>
            <person name="Gu Z."/>
            <person name="Guan P."/>
            <person name="Harris M."/>
            <person name="Harris N.L."/>
            <person name="Harvey D.A."/>
            <person name="Heiman T.J."/>
            <person name="Hernandez J.R."/>
            <person name="Houck J."/>
            <person name="Hostin D."/>
            <person name="Houston K.A."/>
            <person name="Howland T.J."/>
            <person name="Wei M.-H."/>
            <person name="Ibegwam C."/>
            <person name="Jalali M."/>
            <person name="Kalush F."/>
            <person name="Karpen G.H."/>
            <person name="Ke Z."/>
            <person name="Kennison J.A."/>
            <person name="Ketchum K.A."/>
            <person name="Kimmel B.E."/>
            <person name="Kodira C.D."/>
            <person name="Kraft C.L."/>
            <person name="Kravitz S."/>
            <person name="Kulp D."/>
            <person name="Lai Z."/>
            <person name="Lasko P."/>
            <person name="Lei Y."/>
            <person name="Levitsky A.A."/>
            <person name="Li J.H."/>
            <person name="Li Z."/>
            <person name="Liang Y."/>
            <person name="Lin X."/>
            <person name="Liu X."/>
            <person name="Mattei B."/>
            <person name="McIntosh T.C."/>
            <person name="McLeod M.P."/>
            <person name="McPherson D."/>
            <person name="Merkulov G."/>
            <person name="Milshina N.V."/>
            <person name="Mobarry C."/>
            <person name="Morris J."/>
            <person name="Moshrefi A."/>
            <person name="Mount S.M."/>
            <person name="Moy M."/>
            <person name="Murphy B."/>
            <person name="Murphy L."/>
            <person name="Muzny D.M."/>
            <person name="Nelson D.L."/>
            <person name="Nelson D.R."/>
            <person name="Nelson K.A."/>
            <person name="Nixon K."/>
            <person name="Nusskern D.R."/>
            <person name="Pacleb J.M."/>
            <person name="Palazzolo M."/>
            <person name="Pittman G.S."/>
            <person name="Pan S."/>
            <person name="Pollard J."/>
            <person name="Puri V."/>
            <person name="Reese M.G."/>
            <person name="Reinert K."/>
            <person name="Remington K."/>
            <person name="Saunders R.D.C."/>
            <person name="Scheeler F."/>
            <person name="Shen H."/>
            <person name="Shue B.C."/>
            <person name="Siden-Kiamos I."/>
            <person name="Simpson M."/>
            <person name="Skupski M.P."/>
            <person name="Smith T.J."/>
            <person name="Spier E."/>
            <person name="Spradling A.C."/>
            <person name="Stapleton M."/>
            <person name="Strong R."/>
            <person name="Sun E."/>
            <person name="Svirskas R."/>
            <person name="Tector C."/>
            <person name="Turner R."/>
            <person name="Venter E."/>
            <person name="Wang A.H."/>
            <person name="Wang X."/>
            <person name="Wang Z.-Y."/>
            <person name="Wassarman D.A."/>
            <person name="Weinstock G.M."/>
            <person name="Weissenbach J."/>
            <person name="Williams S.M."/>
            <person name="Woodage T."/>
            <person name="Worley K.C."/>
            <person name="Wu D."/>
            <person name="Yang S."/>
            <person name="Yao Q.A."/>
            <person name="Ye J."/>
            <person name="Yeh R.-F."/>
            <person name="Zaveri J.S."/>
            <person name="Zhan M."/>
            <person name="Zhang G."/>
            <person name="Zhao Q."/>
            <person name="Zheng L."/>
            <person name="Zheng X.H."/>
            <person name="Zhong F.N."/>
            <person name="Zhong W."/>
            <person name="Zhou X."/>
            <person name="Zhu S.C."/>
            <person name="Zhu X."/>
            <person name="Smith H.O."/>
            <person name="Gibbs R.A."/>
            <person name="Myers E.W."/>
            <person name="Rubin G.M."/>
            <person name="Venter J.C."/>
        </authorList>
    </citation>
    <scope>NUCLEOTIDE SEQUENCE [LARGE SCALE GENOMIC DNA]</scope>
    <source>
        <strain>Berkeley</strain>
    </source>
</reference>
<reference key="2">
    <citation type="journal article" date="2002" name="Genome Biol.">
        <title>Annotation of the Drosophila melanogaster euchromatic genome: a systematic review.</title>
        <authorList>
            <person name="Misra S."/>
            <person name="Crosby M.A."/>
            <person name="Mungall C.J."/>
            <person name="Matthews B.B."/>
            <person name="Campbell K.S."/>
            <person name="Hradecky P."/>
            <person name="Huang Y."/>
            <person name="Kaminker J.S."/>
            <person name="Millburn G.H."/>
            <person name="Prochnik S.E."/>
            <person name="Smith C.D."/>
            <person name="Tupy J.L."/>
            <person name="Whitfield E.J."/>
            <person name="Bayraktaroglu L."/>
            <person name="Berman B.P."/>
            <person name="Bettencourt B.R."/>
            <person name="Celniker S.E."/>
            <person name="de Grey A.D.N.J."/>
            <person name="Drysdale R.A."/>
            <person name="Harris N.L."/>
            <person name="Richter J."/>
            <person name="Russo S."/>
            <person name="Schroeder A.J."/>
            <person name="Shu S.Q."/>
            <person name="Stapleton M."/>
            <person name="Yamada C."/>
            <person name="Ashburner M."/>
            <person name="Gelbart W.M."/>
            <person name="Rubin G.M."/>
            <person name="Lewis S.E."/>
        </authorList>
    </citation>
    <scope>GENOME REANNOTATION</scope>
    <source>
        <strain>Berkeley</strain>
    </source>
</reference>
<reference key="3">
    <citation type="journal article" date="2002" name="Genome Biol.">
        <title>A Drosophila full-length cDNA resource.</title>
        <authorList>
            <person name="Stapleton M."/>
            <person name="Carlson J.W."/>
            <person name="Brokstein P."/>
            <person name="Yu C."/>
            <person name="Champe M."/>
            <person name="George R.A."/>
            <person name="Guarin H."/>
            <person name="Kronmiller B."/>
            <person name="Pacleb J.M."/>
            <person name="Park S."/>
            <person name="Wan K.H."/>
            <person name="Rubin G.M."/>
            <person name="Celniker S.E."/>
        </authorList>
    </citation>
    <scope>NUCLEOTIDE SEQUENCE [LARGE SCALE MRNA]</scope>
    <source>
        <strain>Berkeley</strain>
        <tissue>Embryo</tissue>
    </source>
</reference>
<reference key="4">
    <citation type="journal article" date="2005" name="Development">
        <title>CrebA regulates secretory activity in the Drosophila salivary gland and epidermis.</title>
        <authorList>
            <person name="Abrams E.W."/>
            <person name="Andrew D.J."/>
        </authorList>
    </citation>
    <scope>IDENTIFICATION</scope>
</reference>
<reference key="5">
    <citation type="journal article" date="2016" name="Nature">
        <title>A CRISPR screen defines a signal peptide processing pathway required by flaviviruses.</title>
        <authorList>
            <person name="Zhang R."/>
            <person name="Miner J.J."/>
            <person name="Gorman M.J."/>
            <person name="Rausch K."/>
            <person name="Ramage H."/>
            <person name="White J.P."/>
            <person name="Zuiani A."/>
            <person name="Zhang P."/>
            <person name="Fernandez E."/>
            <person name="Zhang Q."/>
            <person name="Dowd K.A."/>
            <person name="Pierson T.C."/>
            <person name="Cherry S."/>
            <person name="Diamond M.S."/>
        </authorList>
    </citation>
    <scope>FUNCTION (MICROBIAL INFECTION)</scope>
    <scope>DISRUPTION PHENOTYPE (MICROBIAL INFECTION)</scope>
</reference>
<gene>
    <name type="primary">Spase22-23</name>
    <name type="ORF">CG5677</name>
</gene>
<evidence type="ECO:0000250" key="1">
    <source>
        <dbReference type="UniProtKB" id="P61008"/>
    </source>
</evidence>
<evidence type="ECO:0000250" key="2">
    <source>
        <dbReference type="UniProtKB" id="P61009"/>
    </source>
</evidence>
<evidence type="ECO:0000250" key="3">
    <source>
        <dbReference type="UniProtKB" id="Q12133"/>
    </source>
</evidence>
<evidence type="ECO:0000255" key="4"/>
<evidence type="ECO:0000269" key="5">
    <source>
    </source>
</evidence>
<evidence type="ECO:0000305" key="6"/>
<dbReference type="EMBL" id="AE014297">
    <property type="protein sequence ID" value="AAF56264.1"/>
    <property type="molecule type" value="Genomic_DNA"/>
</dbReference>
<dbReference type="EMBL" id="AY070615">
    <property type="protein sequence ID" value="AAL48086.1"/>
    <property type="molecule type" value="mRNA"/>
</dbReference>
<dbReference type="RefSeq" id="NP_001247279.1">
    <property type="nucleotide sequence ID" value="NM_001260350.2"/>
</dbReference>
<dbReference type="RefSeq" id="NP_651234.1">
    <property type="nucleotide sequence ID" value="NM_142977.5"/>
</dbReference>
<dbReference type="SMR" id="Q9VCA9"/>
<dbReference type="BioGRID" id="67815">
    <property type="interactions" value="3"/>
</dbReference>
<dbReference type="ComplexPortal" id="CPX-2233">
    <property type="entry name" value="Signal peptidase complex"/>
</dbReference>
<dbReference type="DIP" id="DIP-22148N"/>
<dbReference type="FunCoup" id="Q9VCA9">
    <property type="interactions" value="730"/>
</dbReference>
<dbReference type="IntAct" id="Q9VCA9">
    <property type="interactions" value="4"/>
</dbReference>
<dbReference type="STRING" id="7227.FBpp0293581"/>
<dbReference type="GlyCosmos" id="Q9VCA9">
    <property type="glycosylation" value="2 sites, No reported glycans"/>
</dbReference>
<dbReference type="GlyGen" id="Q9VCA9">
    <property type="glycosylation" value="2 sites"/>
</dbReference>
<dbReference type="PaxDb" id="7227-FBpp0293581"/>
<dbReference type="DNASU" id="42885"/>
<dbReference type="EnsemblMetazoa" id="FBtr0084564">
    <property type="protein sequence ID" value="FBpp0083949"/>
    <property type="gene ID" value="FBgn0039172"/>
</dbReference>
<dbReference type="EnsemblMetazoa" id="FBtr0305044">
    <property type="protein sequence ID" value="FBpp0293581"/>
    <property type="gene ID" value="FBgn0039172"/>
</dbReference>
<dbReference type="GeneID" id="42885"/>
<dbReference type="KEGG" id="dme:Dmel_CG5677"/>
<dbReference type="AGR" id="FB:FBgn0039172"/>
<dbReference type="CTD" id="42885"/>
<dbReference type="FlyBase" id="FBgn0039172">
    <property type="gene designation" value="Spase22-23"/>
</dbReference>
<dbReference type="VEuPathDB" id="VectorBase:FBgn0039172"/>
<dbReference type="eggNOG" id="KOG3372">
    <property type="taxonomic scope" value="Eukaryota"/>
</dbReference>
<dbReference type="GeneTree" id="ENSGT00940000169388"/>
<dbReference type="HOGENOM" id="CLU_068714_1_0_1"/>
<dbReference type="InParanoid" id="Q9VCA9"/>
<dbReference type="OMA" id="FWDDGHG"/>
<dbReference type="OrthoDB" id="10261524at2759"/>
<dbReference type="PhylomeDB" id="Q9VCA9"/>
<dbReference type="BioGRID-ORCS" id="42885">
    <property type="hits" value="1 hit in 1 CRISPR screen"/>
</dbReference>
<dbReference type="ChiTaRS" id="Spase22-23">
    <property type="organism name" value="fly"/>
</dbReference>
<dbReference type="GenomeRNAi" id="42885"/>
<dbReference type="PRO" id="PR:Q9VCA9"/>
<dbReference type="Proteomes" id="UP000000803">
    <property type="component" value="Chromosome 3R"/>
</dbReference>
<dbReference type="Bgee" id="FBgn0039172">
    <property type="expression patterns" value="Expressed in male accessory gland main cell (Drosophila) in male reproductive gland and 174 other cell types or tissues"/>
</dbReference>
<dbReference type="ExpressionAtlas" id="Q9VCA9">
    <property type="expression patterns" value="baseline and differential"/>
</dbReference>
<dbReference type="GO" id="GO:0005787">
    <property type="term" value="C:signal peptidase complex"/>
    <property type="evidence" value="ECO:0000318"/>
    <property type="project" value="GO_Central"/>
</dbReference>
<dbReference type="GO" id="GO:0045047">
    <property type="term" value="P:protein targeting to ER"/>
    <property type="evidence" value="ECO:0000318"/>
    <property type="project" value="GO_Central"/>
</dbReference>
<dbReference type="GO" id="GO:0006465">
    <property type="term" value="P:signal peptide processing"/>
    <property type="evidence" value="ECO:0000318"/>
    <property type="project" value="GO_Central"/>
</dbReference>
<dbReference type="InterPro" id="IPR007653">
    <property type="entry name" value="SPC3"/>
</dbReference>
<dbReference type="PANTHER" id="PTHR12804">
    <property type="entry name" value="MICROSOMAL SIGNAL PEPTIDASE 23 KD SUBUNIT SPC22/23"/>
    <property type="match status" value="1"/>
</dbReference>
<dbReference type="PANTHER" id="PTHR12804:SF0">
    <property type="entry name" value="SIGNAL PEPTIDASE COMPLEX SUBUNIT 3"/>
    <property type="match status" value="1"/>
</dbReference>
<dbReference type="Pfam" id="PF04573">
    <property type="entry name" value="SPC22"/>
    <property type="match status" value="1"/>
</dbReference>
<dbReference type="PIRSF" id="PIRSF016089">
    <property type="entry name" value="SPC22"/>
    <property type="match status" value="1"/>
</dbReference>
<organism>
    <name type="scientific">Drosophila melanogaster</name>
    <name type="common">Fruit fly</name>
    <dbReference type="NCBI Taxonomy" id="7227"/>
    <lineage>
        <taxon>Eukaryota</taxon>
        <taxon>Metazoa</taxon>
        <taxon>Ecdysozoa</taxon>
        <taxon>Arthropoda</taxon>
        <taxon>Hexapoda</taxon>
        <taxon>Insecta</taxon>
        <taxon>Pterygota</taxon>
        <taxon>Neoptera</taxon>
        <taxon>Endopterygota</taxon>
        <taxon>Diptera</taxon>
        <taxon>Brachycera</taxon>
        <taxon>Muscomorpha</taxon>
        <taxon>Ephydroidea</taxon>
        <taxon>Drosophilidae</taxon>
        <taxon>Drosophila</taxon>
        <taxon>Sophophora</taxon>
    </lineage>
</organism>
<sequence>MHTVLTRGNATVAYTLSVLACLTFSCFLSTVFLDYRTDANINTVRVLVKNVPDYGASREKHDLGFVTFDLQTNLTGIFNWNVKQLFLYLTAEYQTPANQLNQVVLWDKIILRGDNAVLDFKNMNTKYYFWDDGNGLKDNRNVSLYLSWNIIPNAGLLPSVQATGKHLFKFPADYATSSI</sequence>